<keyword id="KW-0001">2Fe-2S</keyword>
<keyword id="KW-0997">Cell inner membrane</keyword>
<keyword id="KW-1003">Cell membrane</keyword>
<keyword id="KW-0903">Direct protein sequencing</keyword>
<keyword id="KW-1015">Disulfide bond</keyword>
<keyword id="KW-0249">Electron transport</keyword>
<keyword id="KW-0408">Iron</keyword>
<keyword id="KW-0411">Iron-sulfur</keyword>
<keyword id="KW-0472">Membrane</keyword>
<keyword id="KW-0479">Metal-binding</keyword>
<keyword id="KW-1278">Translocase</keyword>
<keyword id="KW-0812">Transmembrane</keyword>
<keyword id="KW-1133">Transmembrane helix</keyword>
<keyword id="KW-0813">Transport</keyword>
<proteinExistence type="evidence at protein level"/>
<feature type="initiator methionine" description="Removed" evidence="4">
    <location>
        <position position="1"/>
    </location>
</feature>
<feature type="chain" id="PRO_0000127772" description="Cytochrome b6-f complex iron-sulfur subunit">
    <location>
        <begin position="2"/>
        <end position="181"/>
    </location>
</feature>
<feature type="transmembrane region" description="Helical" evidence="1">
    <location>
        <begin position="53"/>
        <end position="73"/>
    </location>
</feature>
<feature type="transmembrane region" description="Helical" evidence="1">
    <location>
        <begin position="114"/>
        <end position="134"/>
    </location>
</feature>
<feature type="domain" description="Rieske" evidence="2">
    <location>
        <begin position="85"/>
        <end position="178"/>
    </location>
</feature>
<feature type="region of interest" description="Disordered" evidence="3">
    <location>
        <begin position="1"/>
        <end position="35"/>
    </location>
</feature>
<feature type="binding site" evidence="2">
    <location>
        <position position="124"/>
    </location>
    <ligand>
        <name>[2Fe-2S] cluster</name>
        <dbReference type="ChEBI" id="CHEBI:190135"/>
    </ligand>
</feature>
<feature type="binding site" evidence="2">
    <location>
        <position position="126"/>
    </location>
    <ligand>
        <name>[2Fe-2S] cluster</name>
        <dbReference type="ChEBI" id="CHEBI:190135"/>
    </ligand>
</feature>
<feature type="binding site" evidence="2">
    <location>
        <position position="142"/>
    </location>
    <ligand>
        <name>[2Fe-2S] cluster</name>
        <dbReference type="ChEBI" id="CHEBI:190135"/>
    </ligand>
</feature>
<feature type="binding site" evidence="2">
    <location>
        <position position="145"/>
    </location>
    <ligand>
        <name>[2Fe-2S] cluster</name>
        <dbReference type="ChEBI" id="CHEBI:190135"/>
    </ligand>
</feature>
<feature type="disulfide bond" evidence="2">
    <location>
        <begin position="129"/>
        <end position="144"/>
    </location>
</feature>
<evidence type="ECO:0000255" key="1"/>
<evidence type="ECO:0000255" key="2">
    <source>
        <dbReference type="PROSITE-ProRule" id="PRU00628"/>
    </source>
</evidence>
<evidence type="ECO:0000256" key="3">
    <source>
        <dbReference type="SAM" id="MobiDB-lite"/>
    </source>
</evidence>
<evidence type="ECO:0000269" key="4">
    <source ref="1"/>
</evidence>
<evidence type="ECO:0000305" key="5"/>
<sequence>MAQTGNFKSPARMSSLGQGAAPASSGAVTGGKPREGGLKGVDFERRGFLHKIVGGVGAVVAVSTLYPVVKYIIPPARKIKNVDELTVGKASEVPDGKSKIFQFNEDKVIVVNKGGALTAVSAVCTHLGCLVNWVDADNQYFCPCHGAKYKLTGEIISGPQPLPLKQYKARIEGDSIIISKA</sequence>
<protein>
    <recommendedName>
        <fullName>Cytochrome b6-f complex iron-sulfur subunit</fullName>
        <ecNumber>7.1.1.6</ecNumber>
    </recommendedName>
    <alternativeName>
        <fullName>Plastohydroquinone:plastocyanin oxidoreductase iron-sulfur protein</fullName>
    </alternativeName>
    <alternativeName>
        <fullName>Rieske iron-sulfur protein</fullName>
        <shortName>ISP</shortName>
        <shortName>RISP</shortName>
    </alternativeName>
</protein>
<name>UCRI_CHLTI</name>
<gene>
    <name type="primary">petC</name>
</gene>
<comment type="function">
    <text>Component of the green S-bacteria bc-complex which consists of the Rieske protein and cytochrome b subunit and which appears to lack a cytochrome c1-equivalent. This complex has a comparatively low redox potential.</text>
</comment>
<comment type="catalytic activity">
    <reaction>
        <text>2 oxidized [plastocyanin] + a plastoquinol + 2 H(+)(in) = 2 reduced [plastocyanin] + a plastoquinone + 4 H(+)(out)</text>
        <dbReference type="Rhea" id="RHEA:22148"/>
        <dbReference type="Rhea" id="RHEA-COMP:9561"/>
        <dbReference type="Rhea" id="RHEA-COMP:9562"/>
        <dbReference type="Rhea" id="RHEA-COMP:10039"/>
        <dbReference type="Rhea" id="RHEA-COMP:10040"/>
        <dbReference type="ChEBI" id="CHEBI:15378"/>
        <dbReference type="ChEBI" id="CHEBI:17757"/>
        <dbReference type="ChEBI" id="CHEBI:29036"/>
        <dbReference type="ChEBI" id="CHEBI:49552"/>
        <dbReference type="ChEBI" id="CHEBI:62192"/>
        <dbReference type="EC" id="7.1.1.6"/>
    </reaction>
</comment>
<comment type="cofactor">
    <cofactor evidence="2">
        <name>[2Fe-2S] cluster</name>
        <dbReference type="ChEBI" id="CHEBI:190135"/>
    </cofactor>
    <text evidence="2">Binds 1 [2Fe-2S] cluster per subunit.</text>
</comment>
<comment type="subcellular location">
    <subcellularLocation>
        <location evidence="5">Cell inner membrane</location>
        <topology evidence="5">Multi-pass membrane protein</topology>
    </subcellularLocation>
</comment>
<comment type="miscellaneous">
    <text>The Rieske protein is a high potential 2Fe-2S protein.</text>
</comment>
<comment type="similarity">
    <text evidence="5">Belongs to the Rieske iron-sulfur protein family.</text>
</comment>
<reference key="1">
    <citation type="journal article" date="1994" name="Photosyn. Res.">
        <title>A transcription unit for the Rieske FeS-protein and cytochrome b in Chlorobium limicola.</title>
        <authorList>
            <person name="Schuetz M."/>
            <person name="Zirngibl S."/>
            <person name="le Coutre J."/>
            <person name="Buettner M."/>
            <person name="Xie D.-L."/>
            <person name="Nelson N."/>
            <person name="Deutzmann R."/>
            <person name="Hauska G."/>
        </authorList>
    </citation>
    <scope>NUCLEOTIDE SEQUENCE [GENOMIC DNA]</scope>
    <scope>PROTEIN SEQUENCE OF 2-35</scope>
</reference>
<dbReference type="EC" id="7.1.1.6"/>
<dbReference type="EMBL" id="X73628">
    <property type="protein sequence ID" value="CAA52007.1"/>
    <property type="molecule type" value="Genomic_DNA"/>
</dbReference>
<dbReference type="PIR" id="S38460">
    <property type="entry name" value="S38460"/>
</dbReference>
<dbReference type="RefSeq" id="WP_139457409.1">
    <property type="nucleotide sequence ID" value="NZ_VDCH01000022.1"/>
</dbReference>
<dbReference type="SMR" id="Q46136"/>
<dbReference type="OrthoDB" id="9767869at2"/>
<dbReference type="GO" id="GO:0005886">
    <property type="term" value="C:plasma membrane"/>
    <property type="evidence" value="ECO:0007669"/>
    <property type="project" value="UniProtKB-SubCell"/>
</dbReference>
<dbReference type="GO" id="GO:0051537">
    <property type="term" value="F:2 iron, 2 sulfur cluster binding"/>
    <property type="evidence" value="ECO:0007669"/>
    <property type="project" value="UniProtKB-KW"/>
</dbReference>
<dbReference type="GO" id="GO:0046872">
    <property type="term" value="F:metal ion binding"/>
    <property type="evidence" value="ECO:0007669"/>
    <property type="project" value="UniProtKB-KW"/>
</dbReference>
<dbReference type="GO" id="GO:0009496">
    <property type="term" value="F:plastoquinol--plastocyanin reductase activity"/>
    <property type="evidence" value="ECO:0007669"/>
    <property type="project" value="UniProtKB-EC"/>
</dbReference>
<dbReference type="CDD" id="cd03467">
    <property type="entry name" value="Rieske"/>
    <property type="match status" value="1"/>
</dbReference>
<dbReference type="Gene3D" id="2.102.10.10">
    <property type="entry name" value="Rieske [2Fe-2S] iron-sulphur domain"/>
    <property type="match status" value="1"/>
</dbReference>
<dbReference type="Gene3D" id="1.20.5.700">
    <property type="entry name" value="Single helix bin"/>
    <property type="match status" value="1"/>
</dbReference>
<dbReference type="InterPro" id="IPR017941">
    <property type="entry name" value="Rieske_2Fe-2S"/>
</dbReference>
<dbReference type="InterPro" id="IPR036922">
    <property type="entry name" value="Rieske_2Fe-2S_sf"/>
</dbReference>
<dbReference type="InterPro" id="IPR014349">
    <property type="entry name" value="Rieske_Fe-S_prot"/>
</dbReference>
<dbReference type="InterPro" id="IPR005805">
    <property type="entry name" value="Rieske_Fe-S_prot_C"/>
</dbReference>
<dbReference type="PANTHER" id="PTHR10134">
    <property type="entry name" value="CYTOCHROME B-C1 COMPLEX SUBUNIT RIESKE, MITOCHONDRIAL"/>
    <property type="match status" value="1"/>
</dbReference>
<dbReference type="Pfam" id="PF00355">
    <property type="entry name" value="Rieske"/>
    <property type="match status" value="1"/>
</dbReference>
<dbReference type="PRINTS" id="PR00162">
    <property type="entry name" value="RIESKE"/>
</dbReference>
<dbReference type="SUPFAM" id="SSF50022">
    <property type="entry name" value="ISP domain"/>
    <property type="match status" value="1"/>
</dbReference>
<dbReference type="PROSITE" id="PS51296">
    <property type="entry name" value="RIESKE"/>
    <property type="match status" value="1"/>
</dbReference>
<organism>
    <name type="scientific">Chlorobaculum thiosulfatiphilum</name>
    <name type="common">Chlorobium limicola f.sp. thiosulfatophilum</name>
    <dbReference type="NCBI Taxonomy" id="115852"/>
    <lineage>
        <taxon>Bacteria</taxon>
        <taxon>Pseudomonadati</taxon>
        <taxon>Chlorobiota</taxon>
        <taxon>Chlorobiia</taxon>
        <taxon>Chlorobiales</taxon>
        <taxon>Chlorobiaceae</taxon>
        <taxon>Chlorobaculum</taxon>
    </lineage>
</organism>
<accession>Q46136</accession>